<gene>
    <name type="primary">mscS</name>
    <name evidence="5" type="ORF">N203_05530</name>
</gene>
<feature type="chain" id="PRO_0000440565" description="Small-conductance mechanosensitive channel">
    <location>
        <begin position="1"/>
        <end position="274"/>
    </location>
</feature>
<feature type="topological domain" description="Periplasmic" evidence="4">
    <location>
        <begin position="1"/>
        <end position="21"/>
    </location>
</feature>
<feature type="transmembrane region" description="Helical" evidence="2">
    <location>
        <begin position="22"/>
        <end position="44"/>
    </location>
</feature>
<feature type="topological domain" description="Cytoplasmic" evidence="4">
    <location>
        <begin position="45"/>
        <end position="56"/>
    </location>
</feature>
<feature type="transmembrane region" description="Helical" evidence="2">
    <location>
        <begin position="57"/>
        <end position="77"/>
    </location>
</feature>
<feature type="topological domain" description="Periplasmic" evidence="4">
    <location>
        <begin position="78"/>
        <end position="79"/>
    </location>
</feature>
<feature type="transmembrane region" description="Helical" evidence="2">
    <location>
        <begin position="80"/>
        <end position="100"/>
    </location>
</feature>
<feature type="topological domain" description="Cytoplasmic" evidence="4">
    <location>
        <begin position="101"/>
        <end position="274"/>
    </location>
</feature>
<name>MSCS_HELP0</name>
<reference evidence="5" key="1">
    <citation type="journal article" date="2013" name="Genome Announc.">
        <title>Multiple genome sequences of Helicobacter pylori strains of diverse disease and antibiotic resistance backgrounds from Malaysia.</title>
        <authorList>
            <person name="Rehvathy V."/>
            <person name="Tan M.H."/>
            <person name="Gunaletchumy S.P."/>
            <person name="Teh X."/>
            <person name="Wang S."/>
            <person name="Baybayan P."/>
            <person name="Singh S."/>
            <person name="Ashby M."/>
            <person name="Kaakoush N.O."/>
            <person name="Mitchell H.M."/>
            <person name="Croft L.J."/>
            <person name="Goh K.L."/>
            <person name="Loke M.F."/>
            <person name="Vadivelu J."/>
        </authorList>
    </citation>
    <scope>NUCLEOTIDE SEQUENCE [LARGE SCALE GENOMIC DNA]</scope>
    <source>
        <strain evidence="5">UM084</strain>
    </source>
</reference>
<reference evidence="6" key="2">
    <citation type="journal article" date="2013" name="Protein Sci.">
        <title>Open and shut: crystal structures of the dodecylmaltoside solubilized mechanosensitive channel of small conductance from Escherichia coli and Helicobacter pylori at 4.4 A and 4.1 A resolutions.</title>
        <authorList>
            <person name="Lai J.Y."/>
            <person name="Poon Y.S."/>
            <person name="Kaiser J.T."/>
            <person name="Rees D.C."/>
        </authorList>
    </citation>
    <scope>X-RAY CRYSTALLOGRAPHY (4.14 ANGSTROMS)</scope>
    <scope>TOPOLOGY</scope>
    <scope>SUBUNIT</scope>
</reference>
<dbReference type="EMBL" id="AUSO01000002">
    <property type="protein sequence ID" value="EPZ73970.1"/>
    <property type="molecule type" value="Genomic_DNA"/>
</dbReference>
<dbReference type="RefSeq" id="WP_021304837.1">
    <property type="nucleotide sequence ID" value="NZ_AUSO01000002.1"/>
</dbReference>
<dbReference type="PDB" id="4HW9">
    <property type="method" value="X-ray"/>
    <property type="resolution" value="4.14 A"/>
    <property type="chains" value="A/B/C/D/E/F/G=1-272"/>
</dbReference>
<dbReference type="PDBsum" id="4HW9"/>
<dbReference type="SMR" id="T0DVE4"/>
<dbReference type="PATRIC" id="fig|1355530.3.peg.203"/>
<dbReference type="eggNOG" id="COG0668">
    <property type="taxonomic scope" value="Bacteria"/>
</dbReference>
<dbReference type="GO" id="GO:0005886">
    <property type="term" value="C:plasma membrane"/>
    <property type="evidence" value="ECO:0007669"/>
    <property type="project" value="UniProtKB-SubCell"/>
</dbReference>
<dbReference type="GO" id="GO:0008381">
    <property type="term" value="F:mechanosensitive monoatomic ion channel activity"/>
    <property type="evidence" value="ECO:0007669"/>
    <property type="project" value="InterPro"/>
</dbReference>
<dbReference type="Gene3D" id="1.10.287.1260">
    <property type="match status" value="1"/>
</dbReference>
<dbReference type="Gene3D" id="2.30.30.60">
    <property type="match status" value="1"/>
</dbReference>
<dbReference type="Gene3D" id="3.30.70.100">
    <property type="match status" value="1"/>
</dbReference>
<dbReference type="InterPro" id="IPR010920">
    <property type="entry name" value="LSM_dom_sf"/>
</dbReference>
<dbReference type="InterPro" id="IPR049142">
    <property type="entry name" value="MS_channel_1st"/>
</dbReference>
<dbReference type="InterPro" id="IPR049278">
    <property type="entry name" value="MS_channel_C"/>
</dbReference>
<dbReference type="InterPro" id="IPR045275">
    <property type="entry name" value="MscS_archaea/bacteria_type"/>
</dbReference>
<dbReference type="InterPro" id="IPR023408">
    <property type="entry name" value="MscS_beta-dom_sf"/>
</dbReference>
<dbReference type="InterPro" id="IPR006685">
    <property type="entry name" value="MscS_channel_2nd"/>
</dbReference>
<dbReference type="InterPro" id="IPR011066">
    <property type="entry name" value="MscS_channel_C_sf"/>
</dbReference>
<dbReference type="InterPro" id="IPR011014">
    <property type="entry name" value="MscS_channel_TM-2"/>
</dbReference>
<dbReference type="NCBIfam" id="NF047602">
    <property type="entry name" value="MscsSHelicob"/>
    <property type="match status" value="1"/>
</dbReference>
<dbReference type="PANTHER" id="PTHR30221">
    <property type="entry name" value="SMALL-CONDUCTANCE MECHANOSENSITIVE CHANNEL"/>
    <property type="match status" value="1"/>
</dbReference>
<dbReference type="PANTHER" id="PTHR30221:SF1">
    <property type="entry name" value="SMALL-CONDUCTANCE MECHANOSENSITIVE CHANNEL"/>
    <property type="match status" value="1"/>
</dbReference>
<dbReference type="Pfam" id="PF21088">
    <property type="entry name" value="MS_channel_1st"/>
    <property type="match status" value="1"/>
</dbReference>
<dbReference type="Pfam" id="PF00924">
    <property type="entry name" value="MS_channel_2nd"/>
    <property type="match status" value="1"/>
</dbReference>
<dbReference type="Pfam" id="PF21082">
    <property type="entry name" value="MS_channel_3rd"/>
    <property type="match status" value="1"/>
</dbReference>
<dbReference type="SUPFAM" id="SSF82689">
    <property type="entry name" value="Mechanosensitive channel protein MscS (YggB), C-terminal domain"/>
    <property type="match status" value="1"/>
</dbReference>
<dbReference type="SUPFAM" id="SSF82861">
    <property type="entry name" value="Mechanosensitive channel protein MscS (YggB), transmembrane region"/>
    <property type="match status" value="1"/>
</dbReference>
<dbReference type="SUPFAM" id="SSF50182">
    <property type="entry name" value="Sm-like ribonucleoproteins"/>
    <property type="match status" value="1"/>
</dbReference>
<organism>
    <name type="scientific">Helicobacter pylori (strain UM084)</name>
    <dbReference type="NCBI Taxonomy" id="1355530"/>
    <lineage>
        <taxon>Bacteria</taxon>
        <taxon>Pseudomonadati</taxon>
        <taxon>Campylobacterota</taxon>
        <taxon>Epsilonproteobacteria</taxon>
        <taxon>Campylobacterales</taxon>
        <taxon>Helicobacteraceae</taxon>
        <taxon>Helicobacter</taxon>
    </lineage>
</organism>
<evidence type="ECO:0000250" key="1">
    <source>
        <dbReference type="UniProtKB" id="P0C0S1"/>
    </source>
</evidence>
<evidence type="ECO:0000269" key="2">
    <source>
    </source>
</evidence>
<evidence type="ECO:0000305" key="3"/>
<evidence type="ECO:0000305" key="4">
    <source>
    </source>
</evidence>
<evidence type="ECO:0000312" key="5">
    <source>
        <dbReference type="EMBL" id="EPZ73970.1"/>
    </source>
</evidence>
<evidence type="ECO:0007744" key="6">
    <source>
        <dbReference type="PDB" id="4HW9"/>
    </source>
</evidence>
<protein>
    <recommendedName>
        <fullName>Small-conductance mechanosensitive channel</fullName>
    </recommendedName>
</protein>
<proteinExistence type="evidence at protein level"/>
<comment type="function">
    <text evidence="1">Mechanosensitive channel that participates in the regulation of osmotic pressure changes within the cell, opening in response to stretch forces in the membrane lipid bilayer, without the need for other proteins. Contributes to normal resistance to hypoosmotic shock. Forms an ion channel of 1.0 nanosiemens conductance with a slight preference for anions.</text>
</comment>
<comment type="subunit">
    <text evidence="2">Homoheptamer.</text>
</comment>
<comment type="subcellular location">
    <subcellularLocation>
        <location evidence="1">Cell inner membrane</location>
        <topology evidence="2">Multi-pass membrane protein</topology>
    </subcellularLocation>
</comment>
<comment type="similarity">
    <text evidence="3">Belongs to the MscS (TC 1.A.23) family.</text>
</comment>
<keyword id="KW-0002">3D-structure</keyword>
<keyword id="KW-0997">Cell inner membrane</keyword>
<keyword id="KW-1003">Cell membrane</keyword>
<keyword id="KW-0407">Ion channel</keyword>
<keyword id="KW-0406">Ion transport</keyword>
<keyword id="KW-0472">Membrane</keyword>
<keyword id="KW-0812">Transmembrane</keyword>
<keyword id="KW-1133">Transmembrane helix</keyword>
<keyword id="KW-0813">Transport</keyword>
<sequence>MDEIKTLLVDFFPQAKHFGIILIKAVIVFCIGFYFSFFLRNKTMKLLSKKDEILANFVAQVTFILILIITTIIALSTLGVQTTSIITVLGTVGIAVALALKDYLSSIAGGIILIILHPFKKGDIIEISGLEGKVEALNFFNTSLRLHDGRLAVLPNRSVANSNIINSNNTACRRIEWVCGVGYGSDIELVHKTIKDVIDTMEKIDKNMPTFIGITDFGSSSLNFTIRVWAKIEDGIFNVRSELIERIKNALDANHIEIPFNKLDIAIKNQDSSK</sequence>
<accession>T0DVE4</accession>